<proteinExistence type="inferred from homology"/>
<accession>B8F5E2</accession>
<gene>
    <name evidence="1" type="primary">ileS</name>
    <name type="ordered locus">HAPS_0916</name>
</gene>
<sequence length="938" mass="105815">MTDYKNTLNLPETGFPMRGDLAKREPAMLQNWHDKKLYQKIREASKGKRSFILHDGPPYANGNIHLGHAVNHILKDIINKSKTAMGFDTPYVPGWDCHGLPIELKVEGLVGKPNENISASEFRQKCREYAKEQVDGQKADFMRLGILGDWDNPYLTMNFDTEAHIIRTLGKVIANGHLYKGSKPVHWCLDCGSSLAEAEVEYEDKVSPSIYVRFSAVDPVAVEAKFNAQGKGSGQISAVIWTTTPWTLPSNRAIALNSELEYQLVQFGDERVILATELVEAVQKVTGVEQVEVLGSAKGSDLELMRFNHPFYDFSVPFILGDHVTTDGGTGLVHTAPDHGLDDYIVGQKYKLEMAGLVANDGKFISTTPFFAGKGVFETNDLVLEKLKETGALLKLERIKHSYPHCWRHKTPIIFRATPQWFIGMETQGLRKQALGEIKRVRWIPSWGEARIDTMVANRPDWCISRQRTWGVPMTMFVHNETEQLHPRTLEILEEVAKRVEQAGIQAWWDLDPKEVLGEEDAKIYRKVPDTLDVWFDSGSTYASVVQQRPEFNGNSADMYLEGSDQHRGWFMSSLMLSTATDNKAPYNQVLTHGFTVDEKGRKMSKSLGNVIVPSEVWNKNGADILRLWVASTDYTGEIAVSHNILNSAGDTYRRIRNTARFLLANLNGFDPKRDLVKPEEMIALDRWAVSCALDAQNDIKEAYDNYQFHTVVQRLMRFCSIEMGSFYLDIIKDRQYTTKADSLARRSCQTALWHISEALVRWIAPILSFTADEIWGYLPQVEGRSEFVFTEEFYTDLFGLSESDKLDDNYWQKLLKVRAEVNRVLEQARNDKLIGAALEAKVTVYANDDIRPLLEQLGNELGFVLITSQAIVKPLAEADVAEGELAGLAVKVERADGEKCPRCWHYATDIGANAEHAEICGRCVENVVGEGETRNFA</sequence>
<comment type="function">
    <text evidence="1">Catalyzes the attachment of isoleucine to tRNA(Ile). As IleRS can inadvertently accommodate and process structurally similar amino acids such as valine, to avoid such errors it has two additional distinct tRNA(Ile)-dependent editing activities. One activity is designated as 'pretransfer' editing and involves the hydrolysis of activated Val-AMP. The other activity is designated 'posttransfer' editing and involves deacylation of mischarged Val-tRNA(Ile).</text>
</comment>
<comment type="catalytic activity">
    <reaction evidence="1">
        <text>tRNA(Ile) + L-isoleucine + ATP = L-isoleucyl-tRNA(Ile) + AMP + diphosphate</text>
        <dbReference type="Rhea" id="RHEA:11060"/>
        <dbReference type="Rhea" id="RHEA-COMP:9666"/>
        <dbReference type="Rhea" id="RHEA-COMP:9695"/>
        <dbReference type="ChEBI" id="CHEBI:30616"/>
        <dbReference type="ChEBI" id="CHEBI:33019"/>
        <dbReference type="ChEBI" id="CHEBI:58045"/>
        <dbReference type="ChEBI" id="CHEBI:78442"/>
        <dbReference type="ChEBI" id="CHEBI:78528"/>
        <dbReference type="ChEBI" id="CHEBI:456215"/>
        <dbReference type="EC" id="6.1.1.5"/>
    </reaction>
</comment>
<comment type="cofactor">
    <cofactor evidence="1">
        <name>Zn(2+)</name>
        <dbReference type="ChEBI" id="CHEBI:29105"/>
    </cofactor>
    <text evidence="1">Binds 1 zinc ion per subunit.</text>
</comment>
<comment type="subunit">
    <text evidence="1">Monomer.</text>
</comment>
<comment type="subcellular location">
    <subcellularLocation>
        <location evidence="1">Cytoplasm</location>
    </subcellularLocation>
</comment>
<comment type="domain">
    <text evidence="1">IleRS has two distinct active sites: one for aminoacylation and one for editing. The misactivated valine is translocated from the active site to the editing site, which sterically excludes the correctly activated isoleucine. The single editing site contains two valyl binding pockets, one specific for each substrate (Val-AMP or Val-tRNA(Ile)).</text>
</comment>
<comment type="similarity">
    <text evidence="1">Belongs to the class-I aminoacyl-tRNA synthetase family. IleS type 1 subfamily.</text>
</comment>
<name>SYI_GLAP5</name>
<organism>
    <name type="scientific">Glaesserella parasuis serovar 5 (strain SH0165)</name>
    <name type="common">Haemophilus parasuis</name>
    <dbReference type="NCBI Taxonomy" id="557723"/>
    <lineage>
        <taxon>Bacteria</taxon>
        <taxon>Pseudomonadati</taxon>
        <taxon>Pseudomonadota</taxon>
        <taxon>Gammaproteobacteria</taxon>
        <taxon>Pasteurellales</taxon>
        <taxon>Pasteurellaceae</taxon>
        <taxon>Glaesserella</taxon>
    </lineage>
</organism>
<keyword id="KW-0030">Aminoacyl-tRNA synthetase</keyword>
<keyword id="KW-0067">ATP-binding</keyword>
<keyword id="KW-0963">Cytoplasm</keyword>
<keyword id="KW-0436">Ligase</keyword>
<keyword id="KW-0479">Metal-binding</keyword>
<keyword id="KW-0547">Nucleotide-binding</keyword>
<keyword id="KW-0648">Protein biosynthesis</keyword>
<keyword id="KW-1185">Reference proteome</keyword>
<keyword id="KW-0862">Zinc</keyword>
<protein>
    <recommendedName>
        <fullName evidence="1">Isoleucine--tRNA ligase</fullName>
        <ecNumber evidence="1">6.1.1.5</ecNumber>
    </recommendedName>
    <alternativeName>
        <fullName evidence="1">Isoleucyl-tRNA synthetase</fullName>
        <shortName evidence="1">IleRS</shortName>
    </alternativeName>
</protein>
<feature type="chain" id="PRO_1000189168" description="Isoleucine--tRNA ligase">
    <location>
        <begin position="1"/>
        <end position="938"/>
    </location>
</feature>
<feature type="short sequence motif" description="'HIGH' region">
    <location>
        <begin position="58"/>
        <end position="68"/>
    </location>
</feature>
<feature type="short sequence motif" description="'KMSKS' region">
    <location>
        <begin position="603"/>
        <end position="607"/>
    </location>
</feature>
<feature type="binding site" evidence="1">
    <location>
        <position position="562"/>
    </location>
    <ligand>
        <name>L-isoleucyl-5'-AMP</name>
        <dbReference type="ChEBI" id="CHEBI:178002"/>
    </ligand>
</feature>
<feature type="binding site" evidence="1">
    <location>
        <position position="606"/>
    </location>
    <ligand>
        <name>ATP</name>
        <dbReference type="ChEBI" id="CHEBI:30616"/>
    </ligand>
</feature>
<feature type="binding site" evidence="1">
    <location>
        <position position="901"/>
    </location>
    <ligand>
        <name>Zn(2+)</name>
        <dbReference type="ChEBI" id="CHEBI:29105"/>
    </ligand>
</feature>
<feature type="binding site" evidence="1">
    <location>
        <position position="904"/>
    </location>
    <ligand>
        <name>Zn(2+)</name>
        <dbReference type="ChEBI" id="CHEBI:29105"/>
    </ligand>
</feature>
<feature type="binding site" evidence="1">
    <location>
        <position position="921"/>
    </location>
    <ligand>
        <name>Zn(2+)</name>
        <dbReference type="ChEBI" id="CHEBI:29105"/>
    </ligand>
</feature>
<feature type="binding site" evidence="1">
    <location>
        <position position="924"/>
    </location>
    <ligand>
        <name>Zn(2+)</name>
        <dbReference type="ChEBI" id="CHEBI:29105"/>
    </ligand>
</feature>
<dbReference type="EC" id="6.1.1.5" evidence="1"/>
<dbReference type="EMBL" id="CP001321">
    <property type="protein sequence ID" value="ACL32544.1"/>
    <property type="molecule type" value="Genomic_DNA"/>
</dbReference>
<dbReference type="RefSeq" id="WP_012622009.1">
    <property type="nucleotide sequence ID" value="NC_011852.1"/>
</dbReference>
<dbReference type="SMR" id="B8F5E2"/>
<dbReference type="STRING" id="557723.HAPS_0916"/>
<dbReference type="KEGG" id="hap:HAPS_0916"/>
<dbReference type="PATRIC" id="fig|557723.8.peg.914"/>
<dbReference type="HOGENOM" id="CLU_001493_7_0_6"/>
<dbReference type="Proteomes" id="UP000006743">
    <property type="component" value="Chromosome"/>
</dbReference>
<dbReference type="GO" id="GO:0005829">
    <property type="term" value="C:cytosol"/>
    <property type="evidence" value="ECO:0007669"/>
    <property type="project" value="TreeGrafter"/>
</dbReference>
<dbReference type="GO" id="GO:0002161">
    <property type="term" value="F:aminoacyl-tRNA deacylase activity"/>
    <property type="evidence" value="ECO:0007669"/>
    <property type="project" value="InterPro"/>
</dbReference>
<dbReference type="GO" id="GO:0005524">
    <property type="term" value="F:ATP binding"/>
    <property type="evidence" value="ECO:0007669"/>
    <property type="project" value="UniProtKB-UniRule"/>
</dbReference>
<dbReference type="GO" id="GO:0004822">
    <property type="term" value="F:isoleucine-tRNA ligase activity"/>
    <property type="evidence" value="ECO:0007669"/>
    <property type="project" value="UniProtKB-UniRule"/>
</dbReference>
<dbReference type="GO" id="GO:0000049">
    <property type="term" value="F:tRNA binding"/>
    <property type="evidence" value="ECO:0007669"/>
    <property type="project" value="InterPro"/>
</dbReference>
<dbReference type="GO" id="GO:0008270">
    <property type="term" value="F:zinc ion binding"/>
    <property type="evidence" value="ECO:0007669"/>
    <property type="project" value="UniProtKB-UniRule"/>
</dbReference>
<dbReference type="GO" id="GO:0006428">
    <property type="term" value="P:isoleucyl-tRNA aminoacylation"/>
    <property type="evidence" value="ECO:0007669"/>
    <property type="project" value="UniProtKB-UniRule"/>
</dbReference>
<dbReference type="CDD" id="cd07960">
    <property type="entry name" value="Anticodon_Ia_Ile_BEm"/>
    <property type="match status" value="1"/>
</dbReference>
<dbReference type="CDD" id="cd00818">
    <property type="entry name" value="IleRS_core"/>
    <property type="match status" value="1"/>
</dbReference>
<dbReference type="FunFam" id="1.10.730.20:FF:000001">
    <property type="entry name" value="Isoleucine--tRNA ligase"/>
    <property type="match status" value="1"/>
</dbReference>
<dbReference type="FunFam" id="3.40.50.620:FF:000042">
    <property type="entry name" value="Isoleucine--tRNA ligase"/>
    <property type="match status" value="1"/>
</dbReference>
<dbReference type="FunFam" id="3.40.50.620:FF:000048">
    <property type="entry name" value="Isoleucine--tRNA ligase"/>
    <property type="match status" value="1"/>
</dbReference>
<dbReference type="Gene3D" id="1.10.730.20">
    <property type="match status" value="1"/>
</dbReference>
<dbReference type="Gene3D" id="3.40.50.620">
    <property type="entry name" value="HUPs"/>
    <property type="match status" value="2"/>
</dbReference>
<dbReference type="Gene3D" id="3.90.740.10">
    <property type="entry name" value="Valyl/Leucyl/Isoleucyl-tRNA synthetase, editing domain"/>
    <property type="match status" value="1"/>
</dbReference>
<dbReference type="HAMAP" id="MF_02002">
    <property type="entry name" value="Ile_tRNA_synth_type1"/>
    <property type="match status" value="1"/>
</dbReference>
<dbReference type="InterPro" id="IPR001412">
    <property type="entry name" value="aa-tRNA-synth_I_CS"/>
</dbReference>
<dbReference type="InterPro" id="IPR002300">
    <property type="entry name" value="aa-tRNA-synth_Ia"/>
</dbReference>
<dbReference type="InterPro" id="IPR033708">
    <property type="entry name" value="Anticodon_Ile_BEm"/>
</dbReference>
<dbReference type="InterPro" id="IPR002301">
    <property type="entry name" value="Ile-tRNA-ligase"/>
</dbReference>
<dbReference type="InterPro" id="IPR023585">
    <property type="entry name" value="Ile-tRNA-ligase_type1"/>
</dbReference>
<dbReference type="InterPro" id="IPR050081">
    <property type="entry name" value="Ile-tRNA_ligase"/>
</dbReference>
<dbReference type="InterPro" id="IPR013155">
    <property type="entry name" value="M/V/L/I-tRNA-synth_anticd-bd"/>
</dbReference>
<dbReference type="InterPro" id="IPR014729">
    <property type="entry name" value="Rossmann-like_a/b/a_fold"/>
</dbReference>
<dbReference type="InterPro" id="IPR009080">
    <property type="entry name" value="tRNAsynth_Ia_anticodon-bd"/>
</dbReference>
<dbReference type="InterPro" id="IPR009008">
    <property type="entry name" value="Val/Leu/Ile-tRNA-synth_edit"/>
</dbReference>
<dbReference type="InterPro" id="IPR010663">
    <property type="entry name" value="Znf_FPG/IleRS"/>
</dbReference>
<dbReference type="NCBIfam" id="TIGR00392">
    <property type="entry name" value="ileS"/>
    <property type="match status" value="1"/>
</dbReference>
<dbReference type="PANTHER" id="PTHR42765:SF1">
    <property type="entry name" value="ISOLEUCINE--TRNA LIGASE, MITOCHONDRIAL"/>
    <property type="match status" value="1"/>
</dbReference>
<dbReference type="PANTHER" id="PTHR42765">
    <property type="entry name" value="SOLEUCYL-TRNA SYNTHETASE"/>
    <property type="match status" value="1"/>
</dbReference>
<dbReference type="Pfam" id="PF08264">
    <property type="entry name" value="Anticodon_1"/>
    <property type="match status" value="1"/>
</dbReference>
<dbReference type="Pfam" id="PF00133">
    <property type="entry name" value="tRNA-synt_1"/>
    <property type="match status" value="1"/>
</dbReference>
<dbReference type="Pfam" id="PF06827">
    <property type="entry name" value="zf-FPG_IleRS"/>
    <property type="match status" value="1"/>
</dbReference>
<dbReference type="PRINTS" id="PR00984">
    <property type="entry name" value="TRNASYNTHILE"/>
</dbReference>
<dbReference type="SUPFAM" id="SSF47323">
    <property type="entry name" value="Anticodon-binding domain of a subclass of class I aminoacyl-tRNA synthetases"/>
    <property type="match status" value="1"/>
</dbReference>
<dbReference type="SUPFAM" id="SSF52374">
    <property type="entry name" value="Nucleotidylyl transferase"/>
    <property type="match status" value="1"/>
</dbReference>
<dbReference type="SUPFAM" id="SSF50677">
    <property type="entry name" value="ValRS/IleRS/LeuRS editing domain"/>
    <property type="match status" value="1"/>
</dbReference>
<dbReference type="PROSITE" id="PS00178">
    <property type="entry name" value="AA_TRNA_LIGASE_I"/>
    <property type="match status" value="1"/>
</dbReference>
<reference key="1">
    <citation type="journal article" date="2009" name="J. Bacteriol.">
        <title>Complete genome sequence of Haemophilus parasuis SH0165.</title>
        <authorList>
            <person name="Yue M."/>
            <person name="Yang F."/>
            <person name="Yang J."/>
            <person name="Bei W."/>
            <person name="Cai X."/>
            <person name="Chen L."/>
            <person name="Dong J."/>
            <person name="Zhou R."/>
            <person name="Jin M."/>
            <person name="Jin Q."/>
            <person name="Chen H."/>
        </authorList>
    </citation>
    <scope>NUCLEOTIDE SEQUENCE [LARGE SCALE GENOMIC DNA]</scope>
    <source>
        <strain>SH0165</strain>
    </source>
</reference>
<evidence type="ECO:0000255" key="1">
    <source>
        <dbReference type="HAMAP-Rule" id="MF_02002"/>
    </source>
</evidence>